<evidence type="ECO:0000255" key="1">
    <source>
        <dbReference type="HAMAP-Rule" id="MF_01382"/>
    </source>
</evidence>
<sequence>MLSKIIGSVVGTKNERELKRMRKVVSKINAYEAAIQALSDEQLQQKTEEFKARHQGGESLDALLPEAFAICREASLRVNGMRHYDVQLIGGITLHEGKIAEMKTGEGKTLMGTLAMYLNAISGKGVHLVTVNDYLAARDAELNRPLFGFLGMTVGVIYSQQPPQEKVDAYQADITYGTNNEYGFDYLRDNMVFSLKEKKQRPLNFCIIDEIDSILIDEARTPLIISGQAEDSSRMYALINTIIPVLIRSKDEEANKNNEEEDFWIDEKNRQIEISEKGYEKIERFLIQVGELGENESLYSPSRLPLLAHVQAAIRAHHVFVKNIHYIVDDGEVVIVDENTGRTMPGRRWSEGLHQAVEAKENVEIQAENQTLATTTFQNFFRLYDKLSGMTGTADTEAAEFKSTYDLDVIVIPTHEPIARVDMDDQIFLTKLGKYKGIIREIQEIQAKGAPVLVGTATIEASEELSYLLDQEGVKHNVLNAKQHEREAEIIAQAGSPKSVTIATNMAGRGTDIILGGNWQSFIEDIDAVSPEEMARLKAQWQIKHDQVVAAGGLHIIGSERHESRRIDNQLRGRAGRQGDPGMSRFFLSLEDDLMRIFAGDRVVNMMRAMGLKEDEAIEHKMVSKSIENAQGKVESRDFDARKNLLKYDDVANDQRKVIYGQRDDLLAEMDLLEAIKIMHQEVYNAMINQFIPPGSIDDQWNVDGLEDELENEFKIAMPINDWLDEDRRLDEEGLRAKIIETALDRYHSRREQMGEKDAAQLERHFMLQSLDKHWKEHLTQMDQLRKGIHLRGYAQKNPEQEYKRESFELFQMMLGAIKSETVQDLSRVHIPTKEELEALEIQQRENAAHMQMQFEHSDIDNMDGGVERAAVQSRNVVGGATGASVAGAMAGSSDDADPYAGMNISRNAPCPCGSALKYKQCHGKI</sequence>
<proteinExistence type="inferred from homology"/>
<gene>
    <name evidence="1" type="primary">secA</name>
    <name type="ordered locus">Pcryo_0274</name>
</gene>
<reference key="1">
    <citation type="submission" date="2006-03" db="EMBL/GenBank/DDBJ databases">
        <title>Complete sequence of chromosome of Psychrobacter cryohalolentis K5.</title>
        <authorList>
            <consortium name="US DOE Joint Genome Institute"/>
            <person name="Copeland A."/>
            <person name="Lucas S."/>
            <person name="Lapidus A."/>
            <person name="Barry K."/>
            <person name="Detter J.C."/>
            <person name="Glavina T."/>
            <person name="Hammon N."/>
            <person name="Israni S."/>
            <person name="Dalin E."/>
            <person name="Tice H."/>
            <person name="Pitluck S."/>
            <person name="Brettin T."/>
            <person name="Bruce D."/>
            <person name="Han C."/>
            <person name="Tapia R."/>
            <person name="Sims D.R."/>
            <person name="Gilna P."/>
            <person name="Schmutz J."/>
            <person name="Larimer F."/>
            <person name="Land M."/>
            <person name="Hauser L."/>
            <person name="Kyrpides N."/>
            <person name="Kim E."/>
            <person name="Richardson P."/>
        </authorList>
    </citation>
    <scope>NUCLEOTIDE SEQUENCE [LARGE SCALE GENOMIC DNA]</scope>
    <source>
        <strain>ATCC BAA-1226 / DSM 17306 / VKM B-2378 / K5</strain>
    </source>
</reference>
<name>SECA_PSYCK</name>
<dbReference type="EC" id="7.4.2.8" evidence="1"/>
<dbReference type="EMBL" id="CP000323">
    <property type="protein sequence ID" value="ABE74058.1"/>
    <property type="molecule type" value="Genomic_DNA"/>
</dbReference>
<dbReference type="RefSeq" id="WP_011512646.1">
    <property type="nucleotide sequence ID" value="NC_007969.1"/>
</dbReference>
<dbReference type="SMR" id="Q1QE45"/>
<dbReference type="STRING" id="335284.Pcryo_0274"/>
<dbReference type="KEGG" id="pcr:Pcryo_0274"/>
<dbReference type="eggNOG" id="COG0653">
    <property type="taxonomic scope" value="Bacteria"/>
</dbReference>
<dbReference type="HOGENOM" id="CLU_005314_3_0_6"/>
<dbReference type="Proteomes" id="UP000002425">
    <property type="component" value="Chromosome"/>
</dbReference>
<dbReference type="GO" id="GO:0031522">
    <property type="term" value="C:cell envelope Sec protein transport complex"/>
    <property type="evidence" value="ECO:0007669"/>
    <property type="project" value="TreeGrafter"/>
</dbReference>
<dbReference type="GO" id="GO:0005829">
    <property type="term" value="C:cytosol"/>
    <property type="evidence" value="ECO:0007669"/>
    <property type="project" value="TreeGrafter"/>
</dbReference>
<dbReference type="GO" id="GO:0005886">
    <property type="term" value="C:plasma membrane"/>
    <property type="evidence" value="ECO:0007669"/>
    <property type="project" value="UniProtKB-SubCell"/>
</dbReference>
<dbReference type="GO" id="GO:0005524">
    <property type="term" value="F:ATP binding"/>
    <property type="evidence" value="ECO:0007669"/>
    <property type="project" value="UniProtKB-UniRule"/>
</dbReference>
<dbReference type="GO" id="GO:0046872">
    <property type="term" value="F:metal ion binding"/>
    <property type="evidence" value="ECO:0007669"/>
    <property type="project" value="UniProtKB-KW"/>
</dbReference>
<dbReference type="GO" id="GO:0008564">
    <property type="term" value="F:protein-exporting ATPase activity"/>
    <property type="evidence" value="ECO:0007669"/>
    <property type="project" value="UniProtKB-EC"/>
</dbReference>
<dbReference type="GO" id="GO:0065002">
    <property type="term" value="P:intracellular protein transmembrane transport"/>
    <property type="evidence" value="ECO:0007669"/>
    <property type="project" value="UniProtKB-UniRule"/>
</dbReference>
<dbReference type="GO" id="GO:0017038">
    <property type="term" value="P:protein import"/>
    <property type="evidence" value="ECO:0007669"/>
    <property type="project" value="InterPro"/>
</dbReference>
<dbReference type="GO" id="GO:0006605">
    <property type="term" value="P:protein targeting"/>
    <property type="evidence" value="ECO:0007669"/>
    <property type="project" value="UniProtKB-UniRule"/>
</dbReference>
<dbReference type="GO" id="GO:0043952">
    <property type="term" value="P:protein transport by the Sec complex"/>
    <property type="evidence" value="ECO:0007669"/>
    <property type="project" value="TreeGrafter"/>
</dbReference>
<dbReference type="CDD" id="cd17928">
    <property type="entry name" value="DEXDc_SecA"/>
    <property type="match status" value="1"/>
</dbReference>
<dbReference type="CDD" id="cd18803">
    <property type="entry name" value="SF2_C_secA"/>
    <property type="match status" value="1"/>
</dbReference>
<dbReference type="FunFam" id="3.40.50.300:FF:000113">
    <property type="entry name" value="Preprotein translocase subunit SecA"/>
    <property type="match status" value="1"/>
</dbReference>
<dbReference type="FunFam" id="3.90.1440.10:FF:000001">
    <property type="entry name" value="Preprotein translocase subunit SecA"/>
    <property type="match status" value="1"/>
</dbReference>
<dbReference type="FunFam" id="1.10.3060.10:FF:000003">
    <property type="entry name" value="Protein translocase subunit SecA"/>
    <property type="match status" value="1"/>
</dbReference>
<dbReference type="Gene3D" id="1.10.3060.10">
    <property type="entry name" value="Helical scaffold and wing domains of SecA"/>
    <property type="match status" value="1"/>
</dbReference>
<dbReference type="Gene3D" id="3.40.50.300">
    <property type="entry name" value="P-loop containing nucleotide triphosphate hydrolases"/>
    <property type="match status" value="2"/>
</dbReference>
<dbReference type="Gene3D" id="3.90.1440.10">
    <property type="entry name" value="SecA, preprotein cross-linking domain"/>
    <property type="match status" value="1"/>
</dbReference>
<dbReference type="HAMAP" id="MF_01382">
    <property type="entry name" value="SecA"/>
    <property type="match status" value="1"/>
</dbReference>
<dbReference type="InterPro" id="IPR014001">
    <property type="entry name" value="Helicase_ATP-bd"/>
</dbReference>
<dbReference type="InterPro" id="IPR001650">
    <property type="entry name" value="Helicase_C-like"/>
</dbReference>
<dbReference type="InterPro" id="IPR027417">
    <property type="entry name" value="P-loop_NTPase"/>
</dbReference>
<dbReference type="InterPro" id="IPR004027">
    <property type="entry name" value="SEC_C_motif"/>
</dbReference>
<dbReference type="InterPro" id="IPR000185">
    <property type="entry name" value="SecA"/>
</dbReference>
<dbReference type="InterPro" id="IPR020937">
    <property type="entry name" value="SecA_CS"/>
</dbReference>
<dbReference type="InterPro" id="IPR011115">
    <property type="entry name" value="SecA_DEAD"/>
</dbReference>
<dbReference type="InterPro" id="IPR014018">
    <property type="entry name" value="SecA_motor_DEAD"/>
</dbReference>
<dbReference type="InterPro" id="IPR011130">
    <property type="entry name" value="SecA_preprotein_X-link_dom"/>
</dbReference>
<dbReference type="InterPro" id="IPR044722">
    <property type="entry name" value="SecA_SF2_C"/>
</dbReference>
<dbReference type="InterPro" id="IPR011116">
    <property type="entry name" value="SecA_Wing/Scaffold"/>
</dbReference>
<dbReference type="InterPro" id="IPR036266">
    <property type="entry name" value="SecA_Wing/Scaffold_sf"/>
</dbReference>
<dbReference type="InterPro" id="IPR036670">
    <property type="entry name" value="SecA_X-link_sf"/>
</dbReference>
<dbReference type="NCBIfam" id="NF009538">
    <property type="entry name" value="PRK12904.1"/>
    <property type="match status" value="1"/>
</dbReference>
<dbReference type="NCBIfam" id="TIGR00963">
    <property type="entry name" value="secA"/>
    <property type="match status" value="1"/>
</dbReference>
<dbReference type="PANTHER" id="PTHR30612:SF0">
    <property type="entry name" value="CHLOROPLAST PROTEIN-TRANSPORTING ATPASE"/>
    <property type="match status" value="1"/>
</dbReference>
<dbReference type="PANTHER" id="PTHR30612">
    <property type="entry name" value="SECA INNER MEMBRANE COMPONENT OF SEC PROTEIN SECRETION SYSTEM"/>
    <property type="match status" value="1"/>
</dbReference>
<dbReference type="Pfam" id="PF21090">
    <property type="entry name" value="P-loop_SecA"/>
    <property type="match status" value="1"/>
</dbReference>
<dbReference type="Pfam" id="PF02810">
    <property type="entry name" value="SEC-C"/>
    <property type="match status" value="1"/>
</dbReference>
<dbReference type="Pfam" id="PF07517">
    <property type="entry name" value="SecA_DEAD"/>
    <property type="match status" value="1"/>
</dbReference>
<dbReference type="Pfam" id="PF01043">
    <property type="entry name" value="SecA_PP_bind"/>
    <property type="match status" value="1"/>
</dbReference>
<dbReference type="Pfam" id="PF07516">
    <property type="entry name" value="SecA_SW"/>
    <property type="match status" value="1"/>
</dbReference>
<dbReference type="PRINTS" id="PR00906">
    <property type="entry name" value="SECA"/>
</dbReference>
<dbReference type="SMART" id="SM00957">
    <property type="entry name" value="SecA_DEAD"/>
    <property type="match status" value="1"/>
</dbReference>
<dbReference type="SMART" id="SM00958">
    <property type="entry name" value="SecA_PP_bind"/>
    <property type="match status" value="1"/>
</dbReference>
<dbReference type="SUPFAM" id="SSF81886">
    <property type="entry name" value="Helical scaffold and wing domains of SecA"/>
    <property type="match status" value="1"/>
</dbReference>
<dbReference type="SUPFAM" id="SSF52540">
    <property type="entry name" value="P-loop containing nucleoside triphosphate hydrolases"/>
    <property type="match status" value="2"/>
</dbReference>
<dbReference type="SUPFAM" id="SSF81767">
    <property type="entry name" value="Pre-protein crosslinking domain of SecA"/>
    <property type="match status" value="1"/>
</dbReference>
<dbReference type="PROSITE" id="PS01312">
    <property type="entry name" value="SECA"/>
    <property type="match status" value="1"/>
</dbReference>
<dbReference type="PROSITE" id="PS51196">
    <property type="entry name" value="SECA_MOTOR_DEAD"/>
    <property type="match status" value="1"/>
</dbReference>
<organism>
    <name type="scientific">Psychrobacter cryohalolentis (strain ATCC BAA-1226 / DSM 17306 / VKM B-2378 / K5)</name>
    <dbReference type="NCBI Taxonomy" id="335284"/>
    <lineage>
        <taxon>Bacteria</taxon>
        <taxon>Pseudomonadati</taxon>
        <taxon>Pseudomonadota</taxon>
        <taxon>Gammaproteobacteria</taxon>
        <taxon>Moraxellales</taxon>
        <taxon>Moraxellaceae</taxon>
        <taxon>Psychrobacter</taxon>
    </lineage>
</organism>
<protein>
    <recommendedName>
        <fullName evidence="1">Protein translocase subunit SecA</fullName>
        <ecNumber evidence="1">7.4.2.8</ecNumber>
    </recommendedName>
</protein>
<comment type="function">
    <text evidence="1">Part of the Sec protein translocase complex. Interacts with the SecYEG preprotein conducting channel. Has a central role in coupling the hydrolysis of ATP to the transfer of proteins into and across the cell membrane, serving both as a receptor for the preprotein-SecB complex and as an ATP-driven molecular motor driving the stepwise translocation of polypeptide chains across the membrane.</text>
</comment>
<comment type="catalytic activity">
    <reaction evidence="1">
        <text>ATP + H2O + cellular proteinSide 1 = ADP + phosphate + cellular proteinSide 2.</text>
        <dbReference type="EC" id="7.4.2.8"/>
    </reaction>
</comment>
<comment type="cofactor">
    <cofactor evidence="1">
        <name>Zn(2+)</name>
        <dbReference type="ChEBI" id="CHEBI:29105"/>
    </cofactor>
    <text evidence="1">May bind 1 zinc ion per subunit.</text>
</comment>
<comment type="subunit">
    <text evidence="1">Monomer and homodimer. Part of the essential Sec protein translocation apparatus which comprises SecA, SecYEG and auxiliary proteins SecDF-YajC and YidC.</text>
</comment>
<comment type="subcellular location">
    <subcellularLocation>
        <location evidence="1">Cell inner membrane</location>
        <topology evidence="1">Peripheral membrane protein</topology>
        <orientation evidence="1">Cytoplasmic side</orientation>
    </subcellularLocation>
    <subcellularLocation>
        <location evidence="1">Cytoplasm</location>
    </subcellularLocation>
    <text evidence="1">Distribution is 50-50.</text>
</comment>
<comment type="similarity">
    <text evidence="1">Belongs to the SecA family.</text>
</comment>
<accession>Q1QE45</accession>
<keyword id="KW-0067">ATP-binding</keyword>
<keyword id="KW-0997">Cell inner membrane</keyword>
<keyword id="KW-1003">Cell membrane</keyword>
<keyword id="KW-0963">Cytoplasm</keyword>
<keyword id="KW-0472">Membrane</keyword>
<keyword id="KW-0479">Metal-binding</keyword>
<keyword id="KW-0547">Nucleotide-binding</keyword>
<keyword id="KW-0653">Protein transport</keyword>
<keyword id="KW-1278">Translocase</keyword>
<keyword id="KW-0811">Translocation</keyword>
<keyword id="KW-0813">Transport</keyword>
<keyword id="KW-0862">Zinc</keyword>
<feature type="chain" id="PRO_0000320907" description="Protein translocase subunit SecA">
    <location>
        <begin position="1"/>
        <end position="926"/>
    </location>
</feature>
<feature type="binding site" evidence="1">
    <location>
        <position position="87"/>
    </location>
    <ligand>
        <name>ATP</name>
        <dbReference type="ChEBI" id="CHEBI:30616"/>
    </ligand>
</feature>
<feature type="binding site" evidence="1">
    <location>
        <begin position="105"/>
        <end position="109"/>
    </location>
    <ligand>
        <name>ATP</name>
        <dbReference type="ChEBI" id="CHEBI:30616"/>
    </ligand>
</feature>
<feature type="binding site" evidence="1">
    <location>
        <position position="512"/>
    </location>
    <ligand>
        <name>ATP</name>
        <dbReference type="ChEBI" id="CHEBI:30616"/>
    </ligand>
</feature>
<feature type="binding site" evidence="1">
    <location>
        <position position="911"/>
    </location>
    <ligand>
        <name>Zn(2+)</name>
        <dbReference type="ChEBI" id="CHEBI:29105"/>
    </ligand>
</feature>
<feature type="binding site" evidence="1">
    <location>
        <position position="913"/>
    </location>
    <ligand>
        <name>Zn(2+)</name>
        <dbReference type="ChEBI" id="CHEBI:29105"/>
    </ligand>
</feature>
<feature type="binding site" evidence="1">
    <location>
        <position position="922"/>
    </location>
    <ligand>
        <name>Zn(2+)</name>
        <dbReference type="ChEBI" id="CHEBI:29105"/>
    </ligand>
</feature>
<feature type="binding site" evidence="1">
    <location>
        <position position="923"/>
    </location>
    <ligand>
        <name>Zn(2+)</name>
        <dbReference type="ChEBI" id="CHEBI:29105"/>
    </ligand>
</feature>